<sequence length="203" mass="22200">MIGQLSGKVDSQGDDYVIIDVNGVGYLVYASGKTLGKLAEGEFYKLFIETHVREEHIHLYGFLTLEEKIFFNLLQSVNGIGTRMALFILSSLTPSDIQIAVNNEDKNIFKAISGVGAKLAERIVLELKGKVAKISSGSAIIKESLNIKNITPVASNEVIKALVNLGFSRFEAQNAVQGIITQNPEISIDELIKTALKNRNSNF</sequence>
<accession>Q92I89</accession>
<proteinExistence type="inferred from homology"/>
<dbReference type="EMBL" id="AE006914">
    <property type="protein sequence ID" value="AAL03069.1"/>
    <property type="molecule type" value="Genomic_DNA"/>
</dbReference>
<dbReference type="PIR" id="C97766">
    <property type="entry name" value="C97766"/>
</dbReference>
<dbReference type="RefSeq" id="WP_010977169.1">
    <property type="nucleotide sequence ID" value="NC_003103.1"/>
</dbReference>
<dbReference type="SMR" id="Q92I89"/>
<dbReference type="GeneID" id="928736"/>
<dbReference type="KEGG" id="rco:RC0531"/>
<dbReference type="HOGENOM" id="CLU_087936_3_0_5"/>
<dbReference type="Proteomes" id="UP000000816">
    <property type="component" value="Chromosome"/>
</dbReference>
<dbReference type="GO" id="GO:0005737">
    <property type="term" value="C:cytoplasm"/>
    <property type="evidence" value="ECO:0007669"/>
    <property type="project" value="UniProtKB-SubCell"/>
</dbReference>
<dbReference type="GO" id="GO:0009379">
    <property type="term" value="C:Holliday junction helicase complex"/>
    <property type="evidence" value="ECO:0007669"/>
    <property type="project" value="InterPro"/>
</dbReference>
<dbReference type="GO" id="GO:0048476">
    <property type="term" value="C:Holliday junction resolvase complex"/>
    <property type="evidence" value="ECO:0007669"/>
    <property type="project" value="UniProtKB-UniRule"/>
</dbReference>
<dbReference type="GO" id="GO:0005524">
    <property type="term" value="F:ATP binding"/>
    <property type="evidence" value="ECO:0007669"/>
    <property type="project" value="InterPro"/>
</dbReference>
<dbReference type="GO" id="GO:0000400">
    <property type="term" value="F:four-way junction DNA binding"/>
    <property type="evidence" value="ECO:0007669"/>
    <property type="project" value="UniProtKB-UniRule"/>
</dbReference>
<dbReference type="GO" id="GO:0009378">
    <property type="term" value="F:four-way junction helicase activity"/>
    <property type="evidence" value="ECO:0007669"/>
    <property type="project" value="InterPro"/>
</dbReference>
<dbReference type="GO" id="GO:0006310">
    <property type="term" value="P:DNA recombination"/>
    <property type="evidence" value="ECO:0007669"/>
    <property type="project" value="UniProtKB-UniRule"/>
</dbReference>
<dbReference type="GO" id="GO:0006281">
    <property type="term" value="P:DNA repair"/>
    <property type="evidence" value="ECO:0007669"/>
    <property type="project" value="UniProtKB-UniRule"/>
</dbReference>
<dbReference type="CDD" id="cd14332">
    <property type="entry name" value="UBA_RuvA_C"/>
    <property type="match status" value="1"/>
</dbReference>
<dbReference type="Gene3D" id="1.10.150.20">
    <property type="entry name" value="5' to 3' exonuclease, C-terminal subdomain"/>
    <property type="match status" value="1"/>
</dbReference>
<dbReference type="Gene3D" id="1.10.8.10">
    <property type="entry name" value="DNA helicase RuvA subunit, C-terminal domain"/>
    <property type="match status" value="1"/>
</dbReference>
<dbReference type="Gene3D" id="2.40.50.140">
    <property type="entry name" value="Nucleic acid-binding proteins"/>
    <property type="match status" value="1"/>
</dbReference>
<dbReference type="HAMAP" id="MF_00031">
    <property type="entry name" value="DNA_HJ_migration_RuvA"/>
    <property type="match status" value="1"/>
</dbReference>
<dbReference type="InterPro" id="IPR013849">
    <property type="entry name" value="DNA_helicase_Holl-junc_RuvA_I"/>
</dbReference>
<dbReference type="InterPro" id="IPR012340">
    <property type="entry name" value="NA-bd_OB-fold"/>
</dbReference>
<dbReference type="InterPro" id="IPR000085">
    <property type="entry name" value="RuvA"/>
</dbReference>
<dbReference type="InterPro" id="IPR010994">
    <property type="entry name" value="RuvA_2-like"/>
</dbReference>
<dbReference type="InterPro" id="IPR011114">
    <property type="entry name" value="RuvA_C"/>
</dbReference>
<dbReference type="InterPro" id="IPR036267">
    <property type="entry name" value="RuvA_C_sf"/>
</dbReference>
<dbReference type="NCBIfam" id="TIGR00084">
    <property type="entry name" value="ruvA"/>
    <property type="match status" value="1"/>
</dbReference>
<dbReference type="Pfam" id="PF14520">
    <property type="entry name" value="HHH_5"/>
    <property type="match status" value="1"/>
</dbReference>
<dbReference type="Pfam" id="PF07499">
    <property type="entry name" value="RuvA_C"/>
    <property type="match status" value="1"/>
</dbReference>
<dbReference type="Pfam" id="PF01330">
    <property type="entry name" value="RuvA_N"/>
    <property type="match status" value="1"/>
</dbReference>
<dbReference type="SUPFAM" id="SSF46929">
    <property type="entry name" value="DNA helicase RuvA subunit, C-terminal domain"/>
    <property type="match status" value="1"/>
</dbReference>
<dbReference type="SUPFAM" id="SSF50249">
    <property type="entry name" value="Nucleic acid-binding proteins"/>
    <property type="match status" value="1"/>
</dbReference>
<dbReference type="SUPFAM" id="SSF47781">
    <property type="entry name" value="RuvA domain 2-like"/>
    <property type="match status" value="1"/>
</dbReference>
<gene>
    <name evidence="1" type="primary">ruvA</name>
    <name type="ordered locus">RC0531</name>
</gene>
<comment type="function">
    <text evidence="1">The RuvA-RuvB-RuvC complex processes Holliday junction (HJ) DNA during genetic recombination and DNA repair, while the RuvA-RuvB complex plays an important role in the rescue of blocked DNA replication forks via replication fork reversal (RFR). RuvA specifically binds to HJ cruciform DNA, conferring on it an open structure. The RuvB hexamer acts as an ATP-dependent pump, pulling dsDNA into and through the RuvAB complex. HJ branch migration allows RuvC to scan DNA until it finds its consensus sequence, where it cleaves and resolves the cruciform DNA.</text>
</comment>
<comment type="subunit">
    <text evidence="1">Homotetramer. Forms an RuvA(8)-RuvB(12)-Holliday junction (HJ) complex. HJ DNA is sandwiched between 2 RuvA tetramers; dsDNA enters through RuvA and exits via RuvB. An RuvB hexamer assembles on each DNA strand where it exits the tetramer. Each RuvB hexamer is contacted by two RuvA subunits (via domain III) on 2 adjacent RuvB subunits; this complex drives branch migration. In the full resolvosome a probable DNA-RuvA(4)-RuvB(12)-RuvC(2) complex forms which resolves the HJ.</text>
</comment>
<comment type="subcellular location">
    <subcellularLocation>
        <location evidence="1">Cytoplasm</location>
    </subcellularLocation>
</comment>
<comment type="domain">
    <text evidence="1">Has three domains with a flexible linker between the domains II and III and assumes an 'L' shape. Domain III is highly mobile and contacts RuvB.</text>
</comment>
<comment type="similarity">
    <text evidence="1">Belongs to the RuvA family.</text>
</comment>
<evidence type="ECO:0000255" key="1">
    <source>
        <dbReference type="HAMAP-Rule" id="MF_00031"/>
    </source>
</evidence>
<reference key="1">
    <citation type="journal article" date="2001" name="Science">
        <title>Mechanisms of evolution in Rickettsia conorii and R. prowazekii.</title>
        <authorList>
            <person name="Ogata H."/>
            <person name="Audic S."/>
            <person name="Renesto-Audiffren P."/>
            <person name="Fournier P.-E."/>
            <person name="Barbe V."/>
            <person name="Samson D."/>
            <person name="Roux V."/>
            <person name="Cossart P."/>
            <person name="Weissenbach J."/>
            <person name="Claverie J.-M."/>
            <person name="Raoult D."/>
        </authorList>
    </citation>
    <scope>NUCLEOTIDE SEQUENCE [LARGE SCALE GENOMIC DNA]</scope>
    <source>
        <strain>ATCC VR-613 / Malish 7</strain>
    </source>
</reference>
<feature type="chain" id="PRO_0000094672" description="Holliday junction branch migration complex subunit RuvA">
    <location>
        <begin position="1"/>
        <end position="203"/>
    </location>
</feature>
<feature type="region of interest" description="Domain I" evidence="1">
    <location>
        <begin position="1"/>
        <end position="63"/>
    </location>
</feature>
<feature type="region of interest" description="Domain II" evidence="1">
    <location>
        <begin position="64"/>
        <end position="142"/>
    </location>
</feature>
<feature type="region of interest" description="Flexible linker" evidence="1">
    <location>
        <begin position="143"/>
        <end position="149"/>
    </location>
</feature>
<feature type="region of interest" description="Domain III" evidence="1">
    <location>
        <begin position="150"/>
        <end position="203"/>
    </location>
</feature>
<organism>
    <name type="scientific">Rickettsia conorii (strain ATCC VR-613 / Malish 7)</name>
    <dbReference type="NCBI Taxonomy" id="272944"/>
    <lineage>
        <taxon>Bacteria</taxon>
        <taxon>Pseudomonadati</taxon>
        <taxon>Pseudomonadota</taxon>
        <taxon>Alphaproteobacteria</taxon>
        <taxon>Rickettsiales</taxon>
        <taxon>Rickettsiaceae</taxon>
        <taxon>Rickettsieae</taxon>
        <taxon>Rickettsia</taxon>
        <taxon>spotted fever group</taxon>
    </lineage>
</organism>
<protein>
    <recommendedName>
        <fullName evidence="1">Holliday junction branch migration complex subunit RuvA</fullName>
    </recommendedName>
</protein>
<name>RUVA_RICCN</name>
<keyword id="KW-0963">Cytoplasm</keyword>
<keyword id="KW-0227">DNA damage</keyword>
<keyword id="KW-0233">DNA recombination</keyword>
<keyword id="KW-0234">DNA repair</keyword>
<keyword id="KW-0238">DNA-binding</keyword>